<evidence type="ECO:0000255" key="1">
    <source>
        <dbReference type="HAMAP-Rule" id="MF_01818"/>
    </source>
</evidence>
<organism>
    <name type="scientific">Bacillus cereus (strain Q1)</name>
    <dbReference type="NCBI Taxonomy" id="361100"/>
    <lineage>
        <taxon>Bacteria</taxon>
        <taxon>Bacillati</taxon>
        <taxon>Bacillota</taxon>
        <taxon>Bacilli</taxon>
        <taxon>Bacillales</taxon>
        <taxon>Bacillaceae</taxon>
        <taxon>Bacillus</taxon>
        <taxon>Bacillus cereus group</taxon>
    </lineage>
</organism>
<gene>
    <name evidence="1" type="primary">rnz</name>
    <name type="ordered locus">BCQ_3930</name>
</gene>
<keyword id="KW-0255">Endonuclease</keyword>
<keyword id="KW-0378">Hydrolase</keyword>
<keyword id="KW-0479">Metal-binding</keyword>
<keyword id="KW-0540">Nuclease</keyword>
<keyword id="KW-0819">tRNA processing</keyword>
<keyword id="KW-0862">Zinc</keyword>
<proteinExistence type="inferred from homology"/>
<dbReference type="EC" id="3.1.26.11" evidence="1"/>
<dbReference type="EMBL" id="CP000227">
    <property type="protein sequence ID" value="ACM14358.1"/>
    <property type="molecule type" value="Genomic_DNA"/>
</dbReference>
<dbReference type="SMR" id="B9IXD7"/>
<dbReference type="KEGG" id="bcq:BCQ_3930"/>
<dbReference type="HOGENOM" id="CLU_031317_2_0_9"/>
<dbReference type="Proteomes" id="UP000000441">
    <property type="component" value="Chromosome"/>
</dbReference>
<dbReference type="GO" id="GO:0042781">
    <property type="term" value="F:3'-tRNA processing endoribonuclease activity"/>
    <property type="evidence" value="ECO:0007669"/>
    <property type="project" value="UniProtKB-UniRule"/>
</dbReference>
<dbReference type="GO" id="GO:0008270">
    <property type="term" value="F:zinc ion binding"/>
    <property type="evidence" value="ECO:0007669"/>
    <property type="project" value="UniProtKB-UniRule"/>
</dbReference>
<dbReference type="CDD" id="cd07717">
    <property type="entry name" value="RNaseZ_ZiPD-like_MBL-fold"/>
    <property type="match status" value="1"/>
</dbReference>
<dbReference type="FunFam" id="3.60.15.10:FF:000002">
    <property type="entry name" value="Ribonuclease Z"/>
    <property type="match status" value="1"/>
</dbReference>
<dbReference type="Gene3D" id="3.60.15.10">
    <property type="entry name" value="Ribonuclease Z/Hydroxyacylglutathione hydrolase-like"/>
    <property type="match status" value="1"/>
</dbReference>
<dbReference type="HAMAP" id="MF_01818">
    <property type="entry name" value="RNase_Z_BN"/>
    <property type="match status" value="1"/>
</dbReference>
<dbReference type="InterPro" id="IPR001279">
    <property type="entry name" value="Metallo-B-lactamas"/>
</dbReference>
<dbReference type="InterPro" id="IPR036866">
    <property type="entry name" value="RibonucZ/Hydroxyglut_hydro"/>
</dbReference>
<dbReference type="InterPro" id="IPR013471">
    <property type="entry name" value="RNase_Z/BN"/>
</dbReference>
<dbReference type="NCBIfam" id="NF000800">
    <property type="entry name" value="PRK00055.1-1"/>
    <property type="match status" value="1"/>
</dbReference>
<dbReference type="NCBIfam" id="NF000801">
    <property type="entry name" value="PRK00055.1-3"/>
    <property type="match status" value="1"/>
</dbReference>
<dbReference type="NCBIfam" id="TIGR02651">
    <property type="entry name" value="RNase_Z"/>
    <property type="match status" value="1"/>
</dbReference>
<dbReference type="PANTHER" id="PTHR46018">
    <property type="entry name" value="ZINC PHOSPHODIESTERASE ELAC PROTEIN 1"/>
    <property type="match status" value="1"/>
</dbReference>
<dbReference type="PANTHER" id="PTHR46018:SF2">
    <property type="entry name" value="ZINC PHOSPHODIESTERASE ELAC PROTEIN 1"/>
    <property type="match status" value="1"/>
</dbReference>
<dbReference type="Pfam" id="PF00753">
    <property type="entry name" value="Lactamase_B"/>
    <property type="match status" value="1"/>
</dbReference>
<dbReference type="Pfam" id="PF12706">
    <property type="entry name" value="Lactamase_B_2"/>
    <property type="match status" value="1"/>
</dbReference>
<dbReference type="SMART" id="SM00849">
    <property type="entry name" value="Lactamase_B"/>
    <property type="match status" value="1"/>
</dbReference>
<dbReference type="SUPFAM" id="SSF56281">
    <property type="entry name" value="Metallo-hydrolase/oxidoreductase"/>
    <property type="match status" value="1"/>
</dbReference>
<comment type="function">
    <text evidence="1">Zinc phosphodiesterase, which displays some tRNA 3'-processing endonuclease activity. Probably involved in tRNA maturation, by removing a 3'-trailer from precursor tRNA.</text>
</comment>
<comment type="catalytic activity">
    <reaction evidence="1">
        <text>Endonucleolytic cleavage of RNA, removing extra 3' nucleotides from tRNA precursor, generating 3' termini of tRNAs. A 3'-hydroxy group is left at the tRNA terminus and a 5'-phosphoryl group is left at the trailer molecule.</text>
        <dbReference type="EC" id="3.1.26.11"/>
    </reaction>
</comment>
<comment type="cofactor">
    <cofactor evidence="1">
        <name>Zn(2+)</name>
        <dbReference type="ChEBI" id="CHEBI:29105"/>
    </cofactor>
    <text evidence="1">Binds 2 Zn(2+) ions.</text>
</comment>
<comment type="subunit">
    <text evidence="1">Homodimer.</text>
</comment>
<comment type="similarity">
    <text evidence="1">Belongs to the RNase Z family.</text>
</comment>
<accession>B9IXD7</accession>
<sequence>MEFVFLGTGAGVPSKGRNVSAIALQLLEERGQTWLFDCGEATQHQILHTSVRPRRIEKIFITHLHGDHIFGLPGLLGSRSFQGGTTPLTVYGPKGIKQFIEVALSVSTTHVKYPLEIVEITEEGTVFEDNEFHVETKRLSHGIECFGYRIIEKDIQGALLVDKLLEMGVKPGPLFKRLKDGEVVELENGTILNGQDFIGPPQKGRIITILGDTRFCEASRELAQDADVLVHEATFAAEDEQQAYDYFHSTSKQAASIALQANAKRLILTHISSRYQGDTYKELLKEARELFSNTEIATDLKSFPVER</sequence>
<reference key="1">
    <citation type="journal article" date="2009" name="J. Bacteriol.">
        <title>Complete genome sequence of the extremophilic Bacillus cereus strain Q1 with industrial applications.</title>
        <authorList>
            <person name="Xiong Z."/>
            <person name="Jiang Y."/>
            <person name="Qi D."/>
            <person name="Lu H."/>
            <person name="Yang F."/>
            <person name="Yang J."/>
            <person name="Chen L."/>
            <person name="Sun L."/>
            <person name="Xu X."/>
            <person name="Xue Y."/>
            <person name="Zhu Y."/>
            <person name="Jin Q."/>
        </authorList>
    </citation>
    <scope>NUCLEOTIDE SEQUENCE [LARGE SCALE GENOMIC DNA]</scope>
    <source>
        <strain>Q1</strain>
    </source>
</reference>
<feature type="chain" id="PRO_1000187935" description="Ribonuclease Z">
    <location>
        <begin position="1"/>
        <end position="307"/>
    </location>
</feature>
<feature type="active site" description="Proton acceptor" evidence="1">
    <location>
        <position position="67"/>
    </location>
</feature>
<feature type="binding site" evidence="1">
    <location>
        <position position="63"/>
    </location>
    <ligand>
        <name>Zn(2+)</name>
        <dbReference type="ChEBI" id="CHEBI:29105"/>
        <label>1</label>
        <note>catalytic</note>
    </ligand>
</feature>
<feature type="binding site" evidence="1">
    <location>
        <position position="65"/>
    </location>
    <ligand>
        <name>Zn(2+)</name>
        <dbReference type="ChEBI" id="CHEBI:29105"/>
        <label>1</label>
        <note>catalytic</note>
    </ligand>
</feature>
<feature type="binding site" evidence="1">
    <location>
        <position position="67"/>
    </location>
    <ligand>
        <name>Zn(2+)</name>
        <dbReference type="ChEBI" id="CHEBI:29105"/>
        <label>2</label>
        <note>catalytic</note>
    </ligand>
</feature>
<feature type="binding site" evidence="1">
    <location>
        <position position="68"/>
    </location>
    <ligand>
        <name>Zn(2+)</name>
        <dbReference type="ChEBI" id="CHEBI:29105"/>
        <label>2</label>
        <note>catalytic</note>
    </ligand>
</feature>
<feature type="binding site" evidence="1">
    <location>
        <position position="141"/>
    </location>
    <ligand>
        <name>Zn(2+)</name>
        <dbReference type="ChEBI" id="CHEBI:29105"/>
        <label>1</label>
        <note>catalytic</note>
    </ligand>
</feature>
<feature type="binding site" evidence="1">
    <location>
        <position position="212"/>
    </location>
    <ligand>
        <name>Zn(2+)</name>
        <dbReference type="ChEBI" id="CHEBI:29105"/>
        <label>1</label>
        <note>catalytic</note>
    </ligand>
</feature>
<feature type="binding site" evidence="1">
    <location>
        <position position="212"/>
    </location>
    <ligand>
        <name>Zn(2+)</name>
        <dbReference type="ChEBI" id="CHEBI:29105"/>
        <label>2</label>
        <note>catalytic</note>
    </ligand>
</feature>
<feature type="binding site" evidence="1">
    <location>
        <position position="270"/>
    </location>
    <ligand>
        <name>Zn(2+)</name>
        <dbReference type="ChEBI" id="CHEBI:29105"/>
        <label>2</label>
        <note>catalytic</note>
    </ligand>
</feature>
<protein>
    <recommendedName>
        <fullName evidence="1">Ribonuclease Z</fullName>
        <shortName evidence="1">RNase Z</shortName>
        <ecNumber evidence="1">3.1.26.11</ecNumber>
    </recommendedName>
    <alternativeName>
        <fullName evidence="1">tRNA 3 endonuclease</fullName>
    </alternativeName>
    <alternativeName>
        <fullName evidence="1">tRNase Z</fullName>
    </alternativeName>
</protein>
<name>RNZ_BACCQ</name>